<keyword id="KW-0963">Cytoplasm</keyword>
<keyword id="KW-0460">Magnesium</keyword>
<keyword id="KW-0479">Metal-binding</keyword>
<keyword id="KW-0566">Pantothenate biosynthesis</keyword>
<keyword id="KW-1185">Reference proteome</keyword>
<keyword id="KW-0808">Transferase</keyword>
<sequence>MSAPVTRKRLTPKVIQAMKGECPIVSLTAYTTPVARLLDPHCDLLLVGDSLGMVLYGMESTLAVTLDMMIMHGQAVMRGTSHACVIVDMPFGSYQESKEQAFRNAARVMQETGCDGVKLEGGEEMAETVAFLVRRGIPVFGHVGLMPQQVNTVGGFRSLGRGDDEAGKIRRDAQAIAQAGAFAVVIEGTVEPLAREITALIDIPTVGIGASSACDGQVLVSDDMLGLFQDFTPRFVKRFAHLAPQVSQAAEAYAEEVRARRFPGPEHVFGAKPGA</sequence>
<evidence type="ECO:0000255" key="1">
    <source>
        <dbReference type="HAMAP-Rule" id="MF_00156"/>
    </source>
</evidence>
<organism>
    <name type="scientific">Brucella abortus (strain 2308)</name>
    <dbReference type="NCBI Taxonomy" id="359391"/>
    <lineage>
        <taxon>Bacteria</taxon>
        <taxon>Pseudomonadati</taxon>
        <taxon>Pseudomonadota</taxon>
        <taxon>Alphaproteobacteria</taxon>
        <taxon>Hyphomicrobiales</taxon>
        <taxon>Brucellaceae</taxon>
        <taxon>Brucella/Ochrobactrum group</taxon>
        <taxon>Brucella</taxon>
    </lineage>
</organism>
<dbReference type="EC" id="2.1.2.11" evidence="1"/>
<dbReference type="EMBL" id="AM040264">
    <property type="protein sequence ID" value="CAJ10316.1"/>
    <property type="molecule type" value="Genomic_DNA"/>
</dbReference>
<dbReference type="RefSeq" id="WP_002963495.1">
    <property type="nucleotide sequence ID" value="NZ_KN046823.1"/>
</dbReference>
<dbReference type="SMR" id="Q2YPI1"/>
<dbReference type="STRING" id="359391.BAB1_0360"/>
<dbReference type="GeneID" id="97534281"/>
<dbReference type="KEGG" id="bmf:BAB1_0360"/>
<dbReference type="PATRIC" id="fig|359391.11.peg.2404"/>
<dbReference type="HOGENOM" id="CLU_036645_1_0_5"/>
<dbReference type="PhylomeDB" id="Q2YPI1"/>
<dbReference type="UniPathway" id="UPA00028">
    <property type="reaction ID" value="UER00003"/>
</dbReference>
<dbReference type="Proteomes" id="UP000002719">
    <property type="component" value="Chromosome I"/>
</dbReference>
<dbReference type="GO" id="GO:0005737">
    <property type="term" value="C:cytoplasm"/>
    <property type="evidence" value="ECO:0007669"/>
    <property type="project" value="UniProtKB-SubCell"/>
</dbReference>
<dbReference type="GO" id="GO:0003864">
    <property type="term" value="F:3-methyl-2-oxobutanoate hydroxymethyltransferase activity"/>
    <property type="evidence" value="ECO:0007669"/>
    <property type="project" value="UniProtKB-UniRule"/>
</dbReference>
<dbReference type="GO" id="GO:0000287">
    <property type="term" value="F:magnesium ion binding"/>
    <property type="evidence" value="ECO:0007669"/>
    <property type="project" value="TreeGrafter"/>
</dbReference>
<dbReference type="GO" id="GO:0015940">
    <property type="term" value="P:pantothenate biosynthetic process"/>
    <property type="evidence" value="ECO:0007669"/>
    <property type="project" value="UniProtKB-UniRule"/>
</dbReference>
<dbReference type="CDD" id="cd06557">
    <property type="entry name" value="KPHMT-like"/>
    <property type="match status" value="1"/>
</dbReference>
<dbReference type="FunFam" id="3.20.20.60:FF:000003">
    <property type="entry name" value="3-methyl-2-oxobutanoate hydroxymethyltransferase"/>
    <property type="match status" value="1"/>
</dbReference>
<dbReference type="Gene3D" id="3.20.20.60">
    <property type="entry name" value="Phosphoenolpyruvate-binding domains"/>
    <property type="match status" value="1"/>
</dbReference>
<dbReference type="HAMAP" id="MF_00156">
    <property type="entry name" value="PanB"/>
    <property type="match status" value="1"/>
</dbReference>
<dbReference type="InterPro" id="IPR003700">
    <property type="entry name" value="Pantoate_hydroxy_MeTrfase"/>
</dbReference>
<dbReference type="InterPro" id="IPR015813">
    <property type="entry name" value="Pyrv/PenolPyrv_kinase-like_dom"/>
</dbReference>
<dbReference type="InterPro" id="IPR040442">
    <property type="entry name" value="Pyrv_kinase-like_dom_sf"/>
</dbReference>
<dbReference type="NCBIfam" id="TIGR00222">
    <property type="entry name" value="panB"/>
    <property type="match status" value="1"/>
</dbReference>
<dbReference type="NCBIfam" id="NF001452">
    <property type="entry name" value="PRK00311.1"/>
    <property type="match status" value="1"/>
</dbReference>
<dbReference type="PANTHER" id="PTHR20881">
    <property type="entry name" value="3-METHYL-2-OXOBUTANOATE HYDROXYMETHYLTRANSFERASE"/>
    <property type="match status" value="1"/>
</dbReference>
<dbReference type="PANTHER" id="PTHR20881:SF0">
    <property type="entry name" value="3-METHYL-2-OXOBUTANOATE HYDROXYMETHYLTRANSFERASE"/>
    <property type="match status" value="1"/>
</dbReference>
<dbReference type="Pfam" id="PF02548">
    <property type="entry name" value="Pantoate_transf"/>
    <property type="match status" value="1"/>
</dbReference>
<dbReference type="PIRSF" id="PIRSF000388">
    <property type="entry name" value="Pantoate_hydroxy_MeTrfase"/>
    <property type="match status" value="1"/>
</dbReference>
<dbReference type="SUPFAM" id="SSF51621">
    <property type="entry name" value="Phosphoenolpyruvate/pyruvate domain"/>
    <property type="match status" value="1"/>
</dbReference>
<gene>
    <name evidence="1" type="primary">panB</name>
    <name type="ordered locus">BAB1_0360</name>
</gene>
<protein>
    <recommendedName>
        <fullName evidence="1">3-methyl-2-oxobutanoate hydroxymethyltransferase</fullName>
        <ecNumber evidence="1">2.1.2.11</ecNumber>
    </recommendedName>
    <alternativeName>
        <fullName evidence="1">Ketopantoate hydroxymethyltransferase</fullName>
        <shortName evidence="1">KPHMT</shortName>
    </alternativeName>
</protein>
<reference key="1">
    <citation type="journal article" date="2005" name="Infect. Immun.">
        <title>Whole-genome analyses of speciation events in pathogenic Brucellae.</title>
        <authorList>
            <person name="Chain P.S."/>
            <person name="Comerci D.J."/>
            <person name="Tolmasky M.E."/>
            <person name="Larimer F.W."/>
            <person name="Malfatti S.A."/>
            <person name="Vergez L.M."/>
            <person name="Aguero F."/>
            <person name="Land M.L."/>
            <person name="Ugalde R.A."/>
            <person name="Garcia E."/>
        </authorList>
    </citation>
    <scope>NUCLEOTIDE SEQUENCE [LARGE SCALE GENOMIC DNA]</scope>
    <source>
        <strain>2308</strain>
    </source>
</reference>
<accession>Q2YPI1</accession>
<feature type="chain" id="PRO_0000297227" description="3-methyl-2-oxobutanoate hydroxymethyltransferase">
    <location>
        <begin position="1"/>
        <end position="275"/>
    </location>
</feature>
<feature type="active site" description="Proton acceptor" evidence="1">
    <location>
        <position position="187"/>
    </location>
</feature>
<feature type="binding site" evidence="1">
    <location>
        <begin position="49"/>
        <end position="50"/>
    </location>
    <ligand>
        <name>3-methyl-2-oxobutanoate</name>
        <dbReference type="ChEBI" id="CHEBI:11851"/>
    </ligand>
</feature>
<feature type="binding site" evidence="1">
    <location>
        <position position="49"/>
    </location>
    <ligand>
        <name>Mg(2+)</name>
        <dbReference type="ChEBI" id="CHEBI:18420"/>
    </ligand>
</feature>
<feature type="binding site" evidence="1">
    <location>
        <position position="88"/>
    </location>
    <ligand>
        <name>3-methyl-2-oxobutanoate</name>
        <dbReference type="ChEBI" id="CHEBI:11851"/>
    </ligand>
</feature>
<feature type="binding site" evidence="1">
    <location>
        <position position="88"/>
    </location>
    <ligand>
        <name>Mg(2+)</name>
        <dbReference type="ChEBI" id="CHEBI:18420"/>
    </ligand>
</feature>
<feature type="binding site" evidence="1">
    <location>
        <position position="118"/>
    </location>
    <ligand>
        <name>3-methyl-2-oxobutanoate</name>
        <dbReference type="ChEBI" id="CHEBI:11851"/>
    </ligand>
</feature>
<feature type="binding site" evidence="1">
    <location>
        <position position="120"/>
    </location>
    <ligand>
        <name>Mg(2+)</name>
        <dbReference type="ChEBI" id="CHEBI:18420"/>
    </ligand>
</feature>
<name>PANB_BRUA2</name>
<proteinExistence type="inferred from homology"/>
<comment type="function">
    <text evidence="1">Catalyzes the reversible reaction in which hydroxymethyl group from 5,10-methylenetetrahydrofolate is transferred onto alpha-ketoisovalerate to form ketopantoate.</text>
</comment>
<comment type="catalytic activity">
    <reaction evidence="1">
        <text>3-methyl-2-oxobutanoate + (6R)-5,10-methylene-5,6,7,8-tetrahydrofolate + H2O = 2-dehydropantoate + (6S)-5,6,7,8-tetrahydrofolate</text>
        <dbReference type="Rhea" id="RHEA:11824"/>
        <dbReference type="ChEBI" id="CHEBI:11561"/>
        <dbReference type="ChEBI" id="CHEBI:11851"/>
        <dbReference type="ChEBI" id="CHEBI:15377"/>
        <dbReference type="ChEBI" id="CHEBI:15636"/>
        <dbReference type="ChEBI" id="CHEBI:57453"/>
        <dbReference type="EC" id="2.1.2.11"/>
    </reaction>
</comment>
<comment type="cofactor">
    <cofactor evidence="1">
        <name>Mg(2+)</name>
        <dbReference type="ChEBI" id="CHEBI:18420"/>
    </cofactor>
    <text evidence="1">Binds 1 Mg(2+) ion per subunit.</text>
</comment>
<comment type="pathway">
    <text evidence="1">Cofactor biosynthesis; (R)-pantothenate biosynthesis; (R)-pantoate from 3-methyl-2-oxobutanoate: step 1/2.</text>
</comment>
<comment type="subunit">
    <text evidence="1">Homodecamer; pentamer of dimers.</text>
</comment>
<comment type="subcellular location">
    <subcellularLocation>
        <location evidence="1">Cytoplasm</location>
    </subcellularLocation>
</comment>
<comment type="similarity">
    <text evidence="1">Belongs to the PanB family.</text>
</comment>